<dbReference type="EC" id="4.3.1.17"/>
<dbReference type="EMBL" id="U18997">
    <property type="protein sequence ID" value="AAA57916.1"/>
    <property type="status" value="ALT_FRAME"/>
    <property type="molecule type" value="Genomic_DNA"/>
</dbReference>
<dbReference type="EMBL" id="U18997">
    <property type="protein sequence ID" value="AAA57915.1"/>
    <property type="status" value="ALT_FRAME"/>
    <property type="molecule type" value="Genomic_DNA"/>
</dbReference>
<dbReference type="EMBL" id="U00096">
    <property type="protein sequence ID" value="AAT48169.1"/>
    <property type="molecule type" value="Genomic_DNA"/>
</dbReference>
<dbReference type="EMBL" id="AP009048">
    <property type="protein sequence ID" value="BAE77160.1"/>
    <property type="molecule type" value="Genomic_DNA"/>
</dbReference>
<dbReference type="RefSeq" id="WP_000622126.1">
    <property type="nucleotide sequence ID" value="NZ_LN832404.1"/>
</dbReference>
<dbReference type="RefSeq" id="YP_026204.1">
    <property type="nucleotide sequence ID" value="NC_000913.3"/>
</dbReference>
<dbReference type="SMR" id="P42630"/>
<dbReference type="BioGRID" id="4259263">
    <property type="interactions" value="10"/>
</dbReference>
<dbReference type="BioGRID" id="853471">
    <property type="interactions" value="2"/>
</dbReference>
<dbReference type="DIP" id="DIP-10974N"/>
<dbReference type="FunCoup" id="P42630">
    <property type="interactions" value="298"/>
</dbReference>
<dbReference type="IntAct" id="P42630">
    <property type="interactions" value="3"/>
</dbReference>
<dbReference type="STRING" id="511145.b4471"/>
<dbReference type="jPOST" id="P42630"/>
<dbReference type="PaxDb" id="511145-b4471"/>
<dbReference type="EnsemblBacteria" id="AAT48169">
    <property type="protein sequence ID" value="AAT48169"/>
    <property type="gene ID" value="b4471"/>
</dbReference>
<dbReference type="GeneID" id="2847724"/>
<dbReference type="KEGG" id="ecj:JW5520"/>
<dbReference type="KEGG" id="eco:b4471"/>
<dbReference type="KEGG" id="ecoc:C3026_16975"/>
<dbReference type="PATRIC" id="fig|511145.12.peg.3206"/>
<dbReference type="EchoBASE" id="EB2610"/>
<dbReference type="eggNOG" id="COG1760">
    <property type="taxonomic scope" value="Bacteria"/>
</dbReference>
<dbReference type="HOGENOM" id="CLU_022305_0_1_6"/>
<dbReference type="InParanoid" id="P42630"/>
<dbReference type="OMA" id="WAAMREC"/>
<dbReference type="OrthoDB" id="9805537at2"/>
<dbReference type="PhylomeDB" id="P42630"/>
<dbReference type="BioCyc" id="EcoCyc:LSERINEDEAM3-MONOMER"/>
<dbReference type="BioCyc" id="MetaCyc:LSERINEDEAM3-MONOMER"/>
<dbReference type="BRENDA" id="4.3.1.17">
    <property type="organism ID" value="2026"/>
</dbReference>
<dbReference type="UniPathway" id="UPA00052"/>
<dbReference type="PRO" id="PR:P42630"/>
<dbReference type="Proteomes" id="UP000000625">
    <property type="component" value="Chromosome"/>
</dbReference>
<dbReference type="GO" id="GO:0051539">
    <property type="term" value="F:4 iron, 4 sulfur cluster binding"/>
    <property type="evidence" value="ECO:0007669"/>
    <property type="project" value="UniProtKB-KW"/>
</dbReference>
<dbReference type="GO" id="GO:0003941">
    <property type="term" value="F:L-serine ammonia-lyase activity"/>
    <property type="evidence" value="ECO:0000314"/>
    <property type="project" value="EcoCyc"/>
</dbReference>
<dbReference type="GO" id="GO:0046872">
    <property type="term" value="F:metal ion binding"/>
    <property type="evidence" value="ECO:0007669"/>
    <property type="project" value="UniProtKB-KW"/>
</dbReference>
<dbReference type="GO" id="GO:0009063">
    <property type="term" value="P:amino acid catabolic process"/>
    <property type="evidence" value="ECO:0000314"/>
    <property type="project" value="EcoCyc"/>
</dbReference>
<dbReference type="GO" id="GO:0006094">
    <property type="term" value="P:gluconeogenesis"/>
    <property type="evidence" value="ECO:0007669"/>
    <property type="project" value="UniProtKB-KW"/>
</dbReference>
<dbReference type="GO" id="GO:0070689">
    <property type="term" value="P:L-threonine catabolic process to propionate"/>
    <property type="evidence" value="ECO:0007669"/>
    <property type="project" value="UniProtKB-UniPathway"/>
</dbReference>
<dbReference type="FunFam" id="3.30.1330.90:FF:000001">
    <property type="entry name" value="L-serine ammonia-lyase 1"/>
    <property type="match status" value="1"/>
</dbReference>
<dbReference type="Gene3D" id="3.30.1330.90">
    <property type="entry name" value="D-3-phosphoglycerate dehydrogenase, domain 3"/>
    <property type="match status" value="1"/>
</dbReference>
<dbReference type="InterPro" id="IPR029009">
    <property type="entry name" value="ASB_dom_sf"/>
</dbReference>
<dbReference type="InterPro" id="IPR051318">
    <property type="entry name" value="Fe-S_L-Ser"/>
</dbReference>
<dbReference type="InterPro" id="IPR004644">
    <property type="entry name" value="Fe-S_L-Ser_mono"/>
</dbReference>
<dbReference type="InterPro" id="IPR005130">
    <property type="entry name" value="Ser_deHydtase-like_asu"/>
</dbReference>
<dbReference type="InterPro" id="IPR005131">
    <property type="entry name" value="Ser_deHydtase_bsu"/>
</dbReference>
<dbReference type="NCBIfam" id="NF011614">
    <property type="entry name" value="PRK15040.1"/>
    <property type="match status" value="1"/>
</dbReference>
<dbReference type="NCBIfam" id="TIGR00720">
    <property type="entry name" value="sda_mono"/>
    <property type="match status" value="1"/>
</dbReference>
<dbReference type="PANTHER" id="PTHR30182">
    <property type="entry name" value="L-SERINE DEHYDRATASE"/>
    <property type="match status" value="1"/>
</dbReference>
<dbReference type="PANTHER" id="PTHR30182:SF6">
    <property type="entry name" value="L-SERINE DEHYDRATASE TDCG"/>
    <property type="match status" value="1"/>
</dbReference>
<dbReference type="Pfam" id="PF03313">
    <property type="entry name" value="SDH_alpha"/>
    <property type="match status" value="1"/>
</dbReference>
<dbReference type="Pfam" id="PF03315">
    <property type="entry name" value="SDH_beta"/>
    <property type="match status" value="1"/>
</dbReference>
<dbReference type="SUPFAM" id="SSF143548">
    <property type="entry name" value="Serine metabolism enzymes domain"/>
    <property type="match status" value="1"/>
</dbReference>
<reference key="1">
    <citation type="journal article" date="1997" name="Science">
        <title>The complete genome sequence of Escherichia coli K-12.</title>
        <authorList>
            <person name="Blattner F.R."/>
            <person name="Plunkett G. III"/>
            <person name="Bloch C.A."/>
            <person name="Perna N.T."/>
            <person name="Burland V."/>
            <person name="Riley M."/>
            <person name="Collado-Vides J."/>
            <person name="Glasner J.D."/>
            <person name="Rode C.K."/>
            <person name="Mayhew G.F."/>
            <person name="Gregor J."/>
            <person name="Davis N.W."/>
            <person name="Kirkpatrick H.A."/>
            <person name="Goeden M.A."/>
            <person name="Rose D.J."/>
            <person name="Mau B."/>
            <person name="Shao Y."/>
        </authorList>
    </citation>
    <scope>NUCLEOTIDE SEQUENCE [LARGE SCALE GENOMIC DNA]</scope>
    <source>
        <strain>K12 / MG1655 / ATCC 47076</strain>
    </source>
</reference>
<reference key="2">
    <citation type="journal article" date="2006" name="Nucleic Acids Res.">
        <title>Escherichia coli K-12: a cooperatively developed annotation snapshot -- 2005.</title>
        <authorList>
            <person name="Riley M."/>
            <person name="Abe T."/>
            <person name="Arnaud M.B."/>
            <person name="Berlyn M.K.B."/>
            <person name="Blattner F.R."/>
            <person name="Chaudhuri R.R."/>
            <person name="Glasner J.D."/>
            <person name="Horiuchi T."/>
            <person name="Keseler I.M."/>
            <person name="Kosuge T."/>
            <person name="Mori H."/>
            <person name="Perna N.T."/>
            <person name="Plunkett G. III"/>
            <person name="Rudd K.E."/>
            <person name="Serres M.H."/>
            <person name="Thomas G.H."/>
            <person name="Thomson N.R."/>
            <person name="Wishart D."/>
            <person name="Wanner B.L."/>
        </authorList>
    </citation>
    <scope>SEQUENCE REVISION</scope>
</reference>
<reference key="3">
    <citation type="journal article" date="2006" name="Mol. Syst. Biol.">
        <title>Highly accurate genome sequences of Escherichia coli K-12 strains MG1655 and W3110.</title>
        <authorList>
            <person name="Hayashi K."/>
            <person name="Morooka N."/>
            <person name="Yamamoto Y."/>
            <person name="Fujita K."/>
            <person name="Isono K."/>
            <person name="Choi S."/>
            <person name="Ohtsubo E."/>
            <person name="Baba T."/>
            <person name="Wanner B.L."/>
            <person name="Mori H."/>
            <person name="Horiuchi T."/>
        </authorList>
    </citation>
    <scope>NUCLEOTIDE SEQUENCE [LARGE SCALE GENOMIC DNA]</scope>
    <source>
        <strain>K12 / W3110 / ATCC 27325 / DSM 5911</strain>
    </source>
</reference>
<reference key="4">
    <citation type="journal article" date="1998" name="Mol. Microbiol.">
        <title>Novel keto acid formate-lyase and propionate kinase enzymes are components of an anaerobic pathway in Escherichia coli that degrades L-threonine to propionate.</title>
        <authorList>
            <person name="Hesslinger C."/>
            <person name="Fairhurst S.A."/>
            <person name="Sawers G."/>
        </authorList>
    </citation>
    <scope>CHARACTERIZATION</scope>
</reference>
<comment type="catalytic activity">
    <reaction>
        <text>L-serine = pyruvate + NH4(+)</text>
        <dbReference type="Rhea" id="RHEA:19169"/>
        <dbReference type="ChEBI" id="CHEBI:15361"/>
        <dbReference type="ChEBI" id="CHEBI:28938"/>
        <dbReference type="ChEBI" id="CHEBI:33384"/>
        <dbReference type="EC" id="4.3.1.17"/>
    </reaction>
</comment>
<comment type="cofactor">
    <cofactor evidence="1">
        <name>[4Fe-4S] cluster</name>
        <dbReference type="ChEBI" id="CHEBI:49883"/>
    </cofactor>
    <text evidence="1">Binds 1 [4Fe-4S] cluster.</text>
</comment>
<comment type="pathway">
    <text>Amino-acid degradation; L-threonine degradation via propanoate pathway.</text>
</comment>
<comment type="similarity">
    <text evidence="1">Belongs to the iron-sulfur dependent L-serine dehydratase family.</text>
</comment>
<comment type="sequence caution" evidence="1">
    <conflict type="frameshift">
        <sequence resource="EMBL-CDS" id="AAA57915"/>
    </conflict>
</comment>
<comment type="sequence caution" evidence="1">
    <conflict type="frameshift">
        <sequence resource="EMBL-CDS" id="AAA57916"/>
    </conflict>
</comment>
<keyword id="KW-0004">4Fe-4S</keyword>
<keyword id="KW-0312">Gluconeogenesis</keyword>
<keyword id="KW-0408">Iron</keyword>
<keyword id="KW-0411">Iron-sulfur</keyword>
<keyword id="KW-0456">Lyase</keyword>
<keyword id="KW-0479">Metal-binding</keyword>
<keyword id="KW-1185">Reference proteome</keyword>
<proteinExistence type="evidence at protein level"/>
<accession>P42630</accession>
<accession>P42629</accession>
<accession>Q2M996</accession>
<accession>Q6BF45</accession>
<feature type="chain" id="PRO_0000171905" description="L-serine dehydratase TdcG">
    <location>
        <begin position="1"/>
        <end position="454"/>
    </location>
</feature>
<sequence length="454" mass="48522">MISAFDIFKIGIGPSSSHTVGPMNAGKSFIDRLESSGLLTATSHIVVDLYGSLSLTGKGHATDVAIIMGLAGNSPQDVVIDEIPAFIELVTRSGRLPVASGAHIVDFPVAKNIIFHPEMLPRHENGMRITAWKGQEELLSKTYYSVGGGFIVEEEHFGLSHDVETSVPYDFHSAGELLKMCDYNGLSISGLMMHNELALRSKAEIDAGFARIWQVMHDGIERGMNTEGVLPGPLNVPRRAVALRRQLVSSDNISNDPMNVIDWINMYALAVSEENAAGGRVVTAPTNGACGIIPAVLAYYDKFRRPVNERSIARYFLAAGAIGALYKMNASISGAEVGCQGEIGVACSMAAAGLTELLGGSPAQVCNAAEIAMEHNLGLTCDPVAGQVQIPCIERNAINAVKAVNAARMAMRRTSAPRVSLDKVIETMYETGKDMNDKYRETSRGGLAIKVVCG</sequence>
<organism>
    <name type="scientific">Escherichia coli (strain K12)</name>
    <dbReference type="NCBI Taxonomy" id="83333"/>
    <lineage>
        <taxon>Bacteria</taxon>
        <taxon>Pseudomonadati</taxon>
        <taxon>Pseudomonadota</taxon>
        <taxon>Gammaproteobacteria</taxon>
        <taxon>Enterobacterales</taxon>
        <taxon>Enterobacteriaceae</taxon>
        <taxon>Escherichia</taxon>
    </lineage>
</organism>
<gene>
    <name type="primary">tdcG</name>
    <name type="synonym">yhaP</name>
    <name type="synonym">yhaQ</name>
    <name type="ordered locus">b4471</name>
    <name type="ordered locus">JW5520</name>
</gene>
<evidence type="ECO:0000305" key="1"/>
<name>TDCG_ECOLI</name>
<protein>
    <recommendedName>
        <fullName>L-serine dehydratase TdcG</fullName>
        <shortName>SDH</shortName>
        <ecNumber>4.3.1.17</ecNumber>
    </recommendedName>
    <alternativeName>
        <fullName>L-serine deaminase</fullName>
    </alternativeName>
</protein>